<gene>
    <name evidence="1" type="primary">rnhB</name>
    <name type="ordered locus">Rfer_2002</name>
</gene>
<dbReference type="EC" id="3.1.26.4" evidence="1"/>
<dbReference type="EMBL" id="CP000267">
    <property type="protein sequence ID" value="ABD69727.1"/>
    <property type="molecule type" value="Genomic_DNA"/>
</dbReference>
<dbReference type="SMR" id="Q21WX6"/>
<dbReference type="STRING" id="338969.Rfer_2002"/>
<dbReference type="KEGG" id="rfr:Rfer_2002"/>
<dbReference type="eggNOG" id="COG0164">
    <property type="taxonomic scope" value="Bacteria"/>
</dbReference>
<dbReference type="HOGENOM" id="CLU_036532_3_2_4"/>
<dbReference type="OrthoDB" id="9803420at2"/>
<dbReference type="Proteomes" id="UP000008332">
    <property type="component" value="Chromosome"/>
</dbReference>
<dbReference type="GO" id="GO:0005737">
    <property type="term" value="C:cytoplasm"/>
    <property type="evidence" value="ECO:0007669"/>
    <property type="project" value="UniProtKB-SubCell"/>
</dbReference>
<dbReference type="GO" id="GO:0032299">
    <property type="term" value="C:ribonuclease H2 complex"/>
    <property type="evidence" value="ECO:0007669"/>
    <property type="project" value="TreeGrafter"/>
</dbReference>
<dbReference type="GO" id="GO:0030145">
    <property type="term" value="F:manganese ion binding"/>
    <property type="evidence" value="ECO:0007669"/>
    <property type="project" value="UniProtKB-UniRule"/>
</dbReference>
<dbReference type="GO" id="GO:0003723">
    <property type="term" value="F:RNA binding"/>
    <property type="evidence" value="ECO:0007669"/>
    <property type="project" value="InterPro"/>
</dbReference>
<dbReference type="GO" id="GO:0004523">
    <property type="term" value="F:RNA-DNA hybrid ribonuclease activity"/>
    <property type="evidence" value="ECO:0007669"/>
    <property type="project" value="UniProtKB-UniRule"/>
</dbReference>
<dbReference type="GO" id="GO:0043137">
    <property type="term" value="P:DNA replication, removal of RNA primer"/>
    <property type="evidence" value="ECO:0007669"/>
    <property type="project" value="TreeGrafter"/>
</dbReference>
<dbReference type="GO" id="GO:0006298">
    <property type="term" value="P:mismatch repair"/>
    <property type="evidence" value="ECO:0007669"/>
    <property type="project" value="TreeGrafter"/>
</dbReference>
<dbReference type="CDD" id="cd07182">
    <property type="entry name" value="RNase_HII_bacteria_HII_like"/>
    <property type="match status" value="1"/>
</dbReference>
<dbReference type="FunFam" id="3.30.420.10:FF:000006">
    <property type="entry name" value="Ribonuclease HII"/>
    <property type="match status" value="1"/>
</dbReference>
<dbReference type="Gene3D" id="3.30.420.10">
    <property type="entry name" value="Ribonuclease H-like superfamily/Ribonuclease H"/>
    <property type="match status" value="1"/>
</dbReference>
<dbReference type="HAMAP" id="MF_00052_B">
    <property type="entry name" value="RNase_HII_B"/>
    <property type="match status" value="1"/>
</dbReference>
<dbReference type="InterPro" id="IPR022898">
    <property type="entry name" value="RNase_HII"/>
</dbReference>
<dbReference type="InterPro" id="IPR001352">
    <property type="entry name" value="RNase_HII/HIII"/>
</dbReference>
<dbReference type="InterPro" id="IPR024567">
    <property type="entry name" value="RNase_HII/HIII_dom"/>
</dbReference>
<dbReference type="InterPro" id="IPR012337">
    <property type="entry name" value="RNaseH-like_sf"/>
</dbReference>
<dbReference type="InterPro" id="IPR036397">
    <property type="entry name" value="RNaseH_sf"/>
</dbReference>
<dbReference type="NCBIfam" id="NF000594">
    <property type="entry name" value="PRK00015.1-1"/>
    <property type="match status" value="1"/>
</dbReference>
<dbReference type="NCBIfam" id="NF000595">
    <property type="entry name" value="PRK00015.1-3"/>
    <property type="match status" value="1"/>
</dbReference>
<dbReference type="NCBIfam" id="NF000596">
    <property type="entry name" value="PRK00015.1-4"/>
    <property type="match status" value="1"/>
</dbReference>
<dbReference type="PANTHER" id="PTHR10954">
    <property type="entry name" value="RIBONUCLEASE H2 SUBUNIT A"/>
    <property type="match status" value="1"/>
</dbReference>
<dbReference type="PANTHER" id="PTHR10954:SF18">
    <property type="entry name" value="RIBONUCLEASE HII"/>
    <property type="match status" value="1"/>
</dbReference>
<dbReference type="Pfam" id="PF01351">
    <property type="entry name" value="RNase_HII"/>
    <property type="match status" value="1"/>
</dbReference>
<dbReference type="SUPFAM" id="SSF53098">
    <property type="entry name" value="Ribonuclease H-like"/>
    <property type="match status" value="1"/>
</dbReference>
<dbReference type="PROSITE" id="PS51975">
    <property type="entry name" value="RNASE_H_2"/>
    <property type="match status" value="1"/>
</dbReference>
<accession>Q21WX6</accession>
<name>RNH2_ALBFT</name>
<feature type="chain" id="PRO_0000334945" description="Ribonuclease HII">
    <location>
        <begin position="1"/>
        <end position="207"/>
    </location>
</feature>
<feature type="domain" description="RNase H type-2" evidence="2">
    <location>
        <begin position="18"/>
        <end position="207"/>
    </location>
</feature>
<feature type="binding site" evidence="1">
    <location>
        <position position="24"/>
    </location>
    <ligand>
        <name>a divalent metal cation</name>
        <dbReference type="ChEBI" id="CHEBI:60240"/>
    </ligand>
</feature>
<feature type="binding site" evidence="1">
    <location>
        <position position="25"/>
    </location>
    <ligand>
        <name>a divalent metal cation</name>
        <dbReference type="ChEBI" id="CHEBI:60240"/>
    </ligand>
</feature>
<feature type="binding site" evidence="1">
    <location>
        <position position="116"/>
    </location>
    <ligand>
        <name>a divalent metal cation</name>
        <dbReference type="ChEBI" id="CHEBI:60240"/>
    </ligand>
</feature>
<organism>
    <name type="scientific">Albidiferax ferrireducens (strain ATCC BAA-621 / DSM 15236 / T118)</name>
    <name type="common">Rhodoferax ferrireducens</name>
    <dbReference type="NCBI Taxonomy" id="338969"/>
    <lineage>
        <taxon>Bacteria</taxon>
        <taxon>Pseudomonadati</taxon>
        <taxon>Pseudomonadota</taxon>
        <taxon>Betaproteobacteria</taxon>
        <taxon>Burkholderiales</taxon>
        <taxon>Comamonadaceae</taxon>
        <taxon>Rhodoferax</taxon>
    </lineage>
</organism>
<reference key="1">
    <citation type="submission" date="2006-02" db="EMBL/GenBank/DDBJ databases">
        <title>Complete sequence of chromosome of Rhodoferax ferrireducens DSM 15236.</title>
        <authorList>
            <person name="Copeland A."/>
            <person name="Lucas S."/>
            <person name="Lapidus A."/>
            <person name="Barry K."/>
            <person name="Detter J.C."/>
            <person name="Glavina del Rio T."/>
            <person name="Hammon N."/>
            <person name="Israni S."/>
            <person name="Pitluck S."/>
            <person name="Brettin T."/>
            <person name="Bruce D."/>
            <person name="Han C."/>
            <person name="Tapia R."/>
            <person name="Gilna P."/>
            <person name="Kiss H."/>
            <person name="Schmutz J."/>
            <person name="Larimer F."/>
            <person name="Land M."/>
            <person name="Kyrpides N."/>
            <person name="Ivanova N."/>
            <person name="Richardson P."/>
        </authorList>
    </citation>
    <scope>NUCLEOTIDE SEQUENCE [LARGE SCALE GENOMIC DNA]</scope>
    <source>
        <strain>ATCC BAA-621 / DSM 15236 / T118</strain>
    </source>
</reference>
<proteinExistence type="inferred from homology"/>
<protein>
    <recommendedName>
        <fullName evidence="1">Ribonuclease HII</fullName>
        <shortName evidence="1">RNase HII</shortName>
        <ecNumber evidence="1">3.1.26.4</ecNumber>
    </recommendedName>
</protein>
<sequence length="207" mass="22302">MLHTPSIKQASLLWDVAGLVAGVDEAGRGPLAGPVVAAAVILDDLQPIKGLADSKILSARRREQLFDEIRAKALCCCIAQASVEEIERLNILQATLLAMRRAVEGLRLKPALVLVDGNRLPVLTMRAEAIVKGDALVAAISAASILAKVHRDRWCAEVDVQYPQYGFARHKGYGTVQHLAALTKHGACPQHRKTFGPVAEVLREALP</sequence>
<evidence type="ECO:0000255" key="1">
    <source>
        <dbReference type="HAMAP-Rule" id="MF_00052"/>
    </source>
</evidence>
<evidence type="ECO:0000255" key="2">
    <source>
        <dbReference type="PROSITE-ProRule" id="PRU01319"/>
    </source>
</evidence>
<keyword id="KW-0963">Cytoplasm</keyword>
<keyword id="KW-0255">Endonuclease</keyword>
<keyword id="KW-0378">Hydrolase</keyword>
<keyword id="KW-0464">Manganese</keyword>
<keyword id="KW-0479">Metal-binding</keyword>
<keyword id="KW-0540">Nuclease</keyword>
<keyword id="KW-1185">Reference proteome</keyword>
<comment type="function">
    <text evidence="1">Endonuclease that specifically degrades the RNA of RNA-DNA hybrids.</text>
</comment>
<comment type="catalytic activity">
    <reaction evidence="1">
        <text>Endonucleolytic cleavage to 5'-phosphomonoester.</text>
        <dbReference type="EC" id="3.1.26.4"/>
    </reaction>
</comment>
<comment type="cofactor">
    <cofactor evidence="1">
        <name>Mn(2+)</name>
        <dbReference type="ChEBI" id="CHEBI:29035"/>
    </cofactor>
    <cofactor evidence="1">
        <name>Mg(2+)</name>
        <dbReference type="ChEBI" id="CHEBI:18420"/>
    </cofactor>
    <text evidence="1">Manganese or magnesium. Binds 1 divalent metal ion per monomer in the absence of substrate. May bind a second metal ion after substrate binding.</text>
</comment>
<comment type="subcellular location">
    <subcellularLocation>
        <location evidence="1">Cytoplasm</location>
    </subcellularLocation>
</comment>
<comment type="similarity">
    <text evidence="1">Belongs to the RNase HII family.</text>
</comment>